<evidence type="ECO:0000250" key="1"/>
<evidence type="ECO:0000255" key="2"/>
<evidence type="ECO:0000269" key="3">
    <source>
    </source>
</evidence>
<evidence type="ECO:0000303" key="4">
    <source>
    </source>
</evidence>
<evidence type="ECO:0000305" key="5"/>
<evidence type="ECO:0000312" key="6">
    <source>
        <dbReference type="EMBL" id="BAB16369.1"/>
    </source>
</evidence>
<comment type="function">
    <text evidence="3">Hydrolysis of the glycosidic linkage between oligosaccharides and ceramides of glycosphingolipids, especially b-series polysialogangliosides.</text>
</comment>
<comment type="catalytic activity">
    <reaction evidence="3">
        <text>an oligoglycosyl-(1-&gt;4)-beta-D-glucosyl-(1&lt;-&gt;1)-ceramide + H2O = an oligoglycosyl-(1-&gt;4)-D-glucose + an N-acyl-sphingoid base</text>
        <dbReference type="Rhea" id="RHEA:22288"/>
        <dbReference type="ChEBI" id="CHEBI:15377"/>
        <dbReference type="ChEBI" id="CHEBI:83273"/>
        <dbReference type="ChEBI" id="CHEBI:136875"/>
        <dbReference type="ChEBI" id="CHEBI:156536"/>
        <dbReference type="EC" id="3.2.1.123"/>
    </reaction>
</comment>
<comment type="activity regulation">
    <text evidence="3">Completely inhibited by Hg(2+). Cu(2+) and zinc have no effect on enzyme activity. Lithium, potassium, manganese, Ni(2+), calcium, magnesium and EDTA have no significant effect on enzyme activity. Enzyme requires presence of detergents such as Triton X-100 and Lubrol PX for the hydrolysis of glycosphingolipids. Taurodeoxycholate strongly inhibits the enzyme activity and SDS completely inhibits the enzyme activity.</text>
</comment>
<comment type="biophysicochemical properties">
    <kinetics>
        <KM evidence="3">0.35 mM for GM1</KM>
        <Vmax evidence="3">4.4 uM/min/mg enzyme</Vmax>
    </kinetics>
    <phDependence>
        <text evidence="3">Optimum pH 3.0. Highly stable at acidic pH.</text>
    </phDependence>
</comment>
<comment type="subcellular location">
    <subcellularLocation>
        <location>Secreted</location>
    </subcellularLocation>
    <subcellularLocation>
        <location evidence="1">Nematocyst</location>
    </subcellularLocation>
</comment>
<comment type="similarity">
    <text evidence="2">Belongs to the glycosyl hydrolase 5 (cellulase A) family.</text>
</comment>
<dbReference type="EC" id="3.2.1.123"/>
<dbReference type="EMBL" id="AB047321">
    <property type="protein sequence ID" value="BAB16369.1"/>
    <property type="molecule type" value="mRNA"/>
</dbReference>
<dbReference type="EMBL" id="AB047322">
    <property type="protein sequence ID" value="BAB16370.1"/>
    <property type="molecule type" value="mRNA"/>
</dbReference>
<dbReference type="SMR" id="Q9GV16"/>
<dbReference type="CAZy" id="GH5">
    <property type="family name" value="Glycoside Hydrolase Family 5"/>
</dbReference>
<dbReference type="iPTMnet" id="Q9GV16"/>
<dbReference type="BRENDA" id="3.2.1.123">
    <property type="organism ID" value="1767"/>
</dbReference>
<dbReference type="SABIO-RK" id="Q9GV16"/>
<dbReference type="GO" id="GO:0005576">
    <property type="term" value="C:extracellular region"/>
    <property type="evidence" value="ECO:0007669"/>
    <property type="project" value="UniProtKB-SubCell"/>
</dbReference>
<dbReference type="GO" id="GO:0042151">
    <property type="term" value="C:nematocyst"/>
    <property type="evidence" value="ECO:0007669"/>
    <property type="project" value="UniProtKB-SubCell"/>
</dbReference>
<dbReference type="GO" id="GO:0047876">
    <property type="term" value="F:endoglycosylceramidase activity"/>
    <property type="evidence" value="ECO:0007669"/>
    <property type="project" value="UniProtKB-EC"/>
</dbReference>
<dbReference type="GO" id="GO:1901136">
    <property type="term" value="P:carbohydrate derivative catabolic process"/>
    <property type="evidence" value="ECO:0007669"/>
    <property type="project" value="UniProtKB-ARBA"/>
</dbReference>
<dbReference type="GO" id="GO:0030245">
    <property type="term" value="P:cellulose catabolic process"/>
    <property type="evidence" value="ECO:0007669"/>
    <property type="project" value="UniProtKB-KW"/>
</dbReference>
<dbReference type="GO" id="GO:0016042">
    <property type="term" value="P:lipid catabolic process"/>
    <property type="evidence" value="ECO:0007669"/>
    <property type="project" value="UniProtKB-ARBA"/>
</dbReference>
<dbReference type="Gene3D" id="3.20.20.80">
    <property type="entry name" value="Glycosidases"/>
    <property type="match status" value="1"/>
</dbReference>
<dbReference type="Gene3D" id="2.60.40.1180">
    <property type="entry name" value="Golgi alpha-mannosidase II"/>
    <property type="match status" value="1"/>
</dbReference>
<dbReference type="InterPro" id="IPR041036">
    <property type="entry name" value="GH5_C"/>
</dbReference>
<dbReference type="InterPro" id="IPR001547">
    <property type="entry name" value="Glyco_hydro_5"/>
</dbReference>
<dbReference type="InterPro" id="IPR018087">
    <property type="entry name" value="Glyco_hydro_5_CS"/>
</dbReference>
<dbReference type="InterPro" id="IPR013780">
    <property type="entry name" value="Glyco_hydro_b"/>
</dbReference>
<dbReference type="InterPro" id="IPR017853">
    <property type="entry name" value="Glycoside_hydrolase_SF"/>
</dbReference>
<dbReference type="InterPro" id="IPR052066">
    <property type="entry name" value="Glycosphingolipid_Hydrolases"/>
</dbReference>
<dbReference type="PANTHER" id="PTHR31308">
    <property type="match status" value="1"/>
</dbReference>
<dbReference type="PANTHER" id="PTHR31308:SF3">
    <property type="entry name" value="ENDOGLYCOCERAMIDASE"/>
    <property type="match status" value="1"/>
</dbReference>
<dbReference type="Pfam" id="PF00150">
    <property type="entry name" value="Cellulase"/>
    <property type="match status" value="1"/>
</dbReference>
<dbReference type="Pfam" id="PF18564">
    <property type="entry name" value="Glyco_hydro_5_C"/>
    <property type="match status" value="1"/>
</dbReference>
<dbReference type="SUPFAM" id="SSF51445">
    <property type="entry name" value="(Trans)glycosidases"/>
    <property type="match status" value="1"/>
</dbReference>
<dbReference type="PROSITE" id="PS00659">
    <property type="entry name" value="GLYCOSYL_HYDROL_F5"/>
    <property type="match status" value="1"/>
</dbReference>
<name>EGCSE_CYANO</name>
<sequence length="503" mass="57253">MAETQPLVFVLMSISAILTAGLPINDDASLLISVNPETQQLVDSLGRERFFHGTNVVVKHKPYHPSVEGYDNTSFSEVDMKILQDLGLNTIRLGMMLPGYVPTRGNYNETYLKIIQEIVSKAAKYGIYTLLDMHQDVMSAKFCVEGFPDWAVNTGNADNFPFPLEDKYPLNLQTGYPYPKDCAKHAWGDYYFTEAAAAAFQNFYNNTDGLLDAWADFWKKTAQGFKDYKSVIGYELINEPFAGDIYRDPSLMIPGVADERNLAPAYDVIHKAIRTVDEQHSIFFEGVTWDYFAAGFSKVPGGDAYRNRSVLSYHYYEPPDFNKKFQFEVRMEDLRRLKCGGFLTELLTVGDTAKDMSDMLELFDICDQHKQSWMGWLYKSYGCYKQHLGCLTDSMHDETGHLRDIVLQNTTRTYPQAVAGHTIGYKFDRITKKFDLSFVVTADCRSTESIVYFNKDLHYSNGYDVTVFPKDSVTWKQVEKKIIINHSQKLSAGTTVTFSLVAK</sequence>
<protein>
    <recommendedName>
        <fullName evidence="6">Endoglycoceramidase</fullName>
        <shortName evidence="4">EGCase</shortName>
        <ecNumber>3.2.1.123</ecNumber>
    </recommendedName>
    <alternativeName>
        <fullName evidence="4">Glycosphingolipid-specific enzyme</fullName>
        <shortName evidence="4">GSL-specific enzyme</shortName>
    </alternativeName>
</protein>
<reference evidence="5 6" key="1">
    <citation type="journal article" date="2000" name="J. Biol. Chem.">
        <title>Purification, characterization, and cDNA cloning of a novel acidic endoglycoceramidase from the jellyfish, Cyanea nozakii.</title>
        <authorList>
            <person name="Horibata Y."/>
            <person name="Okino N."/>
            <person name="Ichinose S."/>
            <person name="Omori A."/>
            <person name="Ito M."/>
        </authorList>
    </citation>
    <scope>NUCLEOTIDE SEQUENCE [MRNA]</scope>
    <scope>PROTEIN SEQUENCE OF 26-42; 62-78; 230-251 AND 299-318</scope>
    <scope>FUNCTION</scope>
    <scope>CATALYTIC ACTIVITY</scope>
    <scope>ACTIVITY REGULATION</scope>
    <scope>BIOPHYSICOCHEMICAL PROPERTIES</scope>
    <scope>GLYCOSYLATION AT ASN-72 AND ASN-307</scope>
    <scope>VARIANT PRO-172</scope>
    <source>
        <tissue evidence="3">Tentacle</tissue>
    </source>
</reference>
<keyword id="KW-0119">Carbohydrate metabolism</keyword>
<keyword id="KW-0136">Cellulose degradation</keyword>
<keyword id="KW-0903">Direct protein sequencing</keyword>
<keyword id="KW-0325">Glycoprotein</keyword>
<keyword id="KW-0326">Glycosidase</keyword>
<keyword id="KW-0378">Hydrolase</keyword>
<keyword id="KW-0166">Nematocyst</keyword>
<keyword id="KW-0624">Polysaccharide degradation</keyword>
<keyword id="KW-0964">Secreted</keyword>
<keyword id="KW-0732">Signal</keyword>
<accession>Q9GV16</accession>
<accession>Q9GV15</accession>
<feature type="signal peptide" evidence="2">
    <location>
        <begin position="1"/>
        <end position="21"/>
    </location>
</feature>
<feature type="chain" id="PRO_0000390381" description="Endoglycoceramidase" evidence="2">
    <location>
        <begin position="22"/>
        <end position="503"/>
    </location>
</feature>
<feature type="active site" description="Proton donor" evidence="2">
    <location>
        <position position="239"/>
    </location>
</feature>
<feature type="glycosylation site" description="N-linked (GlcNAc...) asparagine" evidence="3">
    <location>
        <position position="72"/>
    </location>
</feature>
<feature type="glycosylation site" description="N-linked (GlcNAc...) asparagine" evidence="2">
    <location>
        <position position="108"/>
    </location>
</feature>
<feature type="glycosylation site" description="N-linked (GlcNAc...) asparagine" evidence="2">
    <location>
        <position position="205"/>
    </location>
</feature>
<feature type="glycosylation site" description="N-linked (GlcNAc...) asparagine" evidence="3">
    <location>
        <position position="307"/>
    </location>
</feature>
<feature type="glycosylation site" description="N-linked (GlcNAc...) asparagine" evidence="2">
    <location>
        <position position="409"/>
    </location>
</feature>
<feature type="glycosylation site" description="N-linked (GlcNAc...) asparagine" evidence="2">
    <location>
        <position position="485"/>
    </location>
</feature>
<feature type="sequence variant" evidence="3">
    <original>L</original>
    <variation>P</variation>
    <location>
        <position position="172"/>
    </location>
</feature>
<organism>
    <name type="scientific">Cyanea nozakii</name>
    <name type="common">Jellyfish</name>
    <dbReference type="NCBI Taxonomy" id="135523"/>
    <lineage>
        <taxon>Eukaryota</taxon>
        <taxon>Metazoa</taxon>
        <taxon>Cnidaria</taxon>
        <taxon>Scyphozoa</taxon>
        <taxon>Semaeostomeae</taxon>
        <taxon>Cyaneidae</taxon>
        <taxon>Cyanea</taxon>
    </lineage>
</organism>
<proteinExistence type="evidence at protein level"/>